<reference key="1">
    <citation type="journal article" date="2002" name="Lancet">
        <title>Genome and virulence determinants of high virulence community-acquired MRSA.</title>
        <authorList>
            <person name="Baba T."/>
            <person name="Takeuchi F."/>
            <person name="Kuroda M."/>
            <person name="Yuzawa H."/>
            <person name="Aoki K."/>
            <person name="Oguchi A."/>
            <person name="Nagai Y."/>
            <person name="Iwama N."/>
            <person name="Asano K."/>
            <person name="Naimi T."/>
            <person name="Kuroda H."/>
            <person name="Cui L."/>
            <person name="Yamamoto K."/>
            <person name="Hiramatsu K."/>
        </authorList>
    </citation>
    <scope>NUCLEOTIDE SEQUENCE [LARGE SCALE GENOMIC DNA]</scope>
    <source>
        <strain>MW2</strain>
    </source>
</reference>
<gene>
    <name type="primary">flp</name>
    <name type="ordered locus">MW2365</name>
</gene>
<comment type="function">
    <text evidence="1">Its precise function is unknown. Has no penicillin-binding activity and is not involved in methicillin resistance (By similarity).</text>
</comment>
<comment type="subcellular location">
    <subcellularLocation>
        <location evidence="3">Cell membrane</location>
        <topology evidence="3">Multi-pass membrane protein</topology>
    </subcellularLocation>
</comment>
<comment type="miscellaneous">
    <text evidence="1">Has two of three conserved motifs typically found in penicillin-binding proteins (PBPs) and beta-lactamases, but no penicillin-binding activity has been detected.</text>
</comment>
<organism>
    <name type="scientific">Staphylococcus aureus (strain MW2)</name>
    <dbReference type="NCBI Taxonomy" id="196620"/>
    <lineage>
        <taxon>Bacteria</taxon>
        <taxon>Bacillati</taxon>
        <taxon>Bacillota</taxon>
        <taxon>Bacilli</taxon>
        <taxon>Bacillales</taxon>
        <taxon>Staphylococcaceae</taxon>
        <taxon>Staphylococcus</taxon>
    </lineage>
</organism>
<name>FLP_STAAW</name>
<keyword id="KW-1003">Cell membrane</keyword>
<keyword id="KW-0472">Membrane</keyword>
<keyword id="KW-0812">Transmembrane</keyword>
<keyword id="KW-1133">Transmembrane helix</keyword>
<feature type="chain" id="PRO_0000087310" description="Protein flp">
    <location>
        <begin position="1"/>
        <end position="498"/>
    </location>
</feature>
<feature type="transmembrane region" description="Helical" evidence="2">
    <location>
        <begin position="6"/>
        <end position="26"/>
    </location>
</feature>
<feature type="transmembrane region" description="Helical" evidence="2">
    <location>
        <begin position="389"/>
        <end position="409"/>
    </location>
</feature>
<feature type="transmembrane region" description="Helical" evidence="2">
    <location>
        <begin position="433"/>
        <end position="453"/>
    </location>
</feature>
<feature type="transmembrane region" description="Helical" evidence="2">
    <location>
        <begin position="471"/>
        <end position="491"/>
    </location>
</feature>
<proteinExistence type="inferred from homology"/>
<dbReference type="EMBL" id="BA000033">
    <property type="protein sequence ID" value="BAB96230.1"/>
    <property type="molecule type" value="Genomic_DNA"/>
</dbReference>
<dbReference type="RefSeq" id="WP_000208557.1">
    <property type="nucleotide sequence ID" value="NC_003923.1"/>
</dbReference>
<dbReference type="SMR" id="Q8NUZ4"/>
<dbReference type="MEROPS" id="S12.011"/>
<dbReference type="KEGG" id="sam:MW2365"/>
<dbReference type="HOGENOM" id="CLU_020027_4_2_9"/>
<dbReference type="GO" id="GO:0005886">
    <property type="term" value="C:plasma membrane"/>
    <property type="evidence" value="ECO:0007669"/>
    <property type="project" value="UniProtKB-SubCell"/>
</dbReference>
<dbReference type="Gene3D" id="3.40.710.10">
    <property type="entry name" value="DD-peptidase/beta-lactamase superfamily"/>
    <property type="match status" value="1"/>
</dbReference>
<dbReference type="InterPro" id="IPR050491">
    <property type="entry name" value="Bact_CellWall_Synth/Modif"/>
</dbReference>
<dbReference type="InterPro" id="IPR001466">
    <property type="entry name" value="Beta-lactam-related"/>
</dbReference>
<dbReference type="InterPro" id="IPR012338">
    <property type="entry name" value="Beta-lactam/transpept-like"/>
</dbReference>
<dbReference type="PANTHER" id="PTHR46825">
    <property type="entry name" value="D-ALANYL-D-ALANINE-CARBOXYPEPTIDASE/ENDOPEPTIDASE AMPH"/>
    <property type="match status" value="1"/>
</dbReference>
<dbReference type="PANTHER" id="PTHR46825:SF11">
    <property type="entry name" value="PENICILLIN-BINDING PROTEIN 4"/>
    <property type="match status" value="1"/>
</dbReference>
<dbReference type="Pfam" id="PF00144">
    <property type="entry name" value="Beta-lactamase"/>
    <property type="match status" value="1"/>
</dbReference>
<dbReference type="SUPFAM" id="SSF56601">
    <property type="entry name" value="beta-lactamase/transpeptidase-like"/>
    <property type="match status" value="1"/>
</dbReference>
<protein>
    <recommendedName>
        <fullName>Protein flp</fullName>
    </recommendedName>
    <alternativeName>
        <fullName>FmtA-like protein</fullName>
    </alternativeName>
</protein>
<accession>Q8NUZ4</accession>
<evidence type="ECO:0000250" key="1"/>
<evidence type="ECO:0000255" key="2"/>
<evidence type="ECO:0000305" key="3"/>
<sequence>MTTKKLYFLSISIIILVAISIAIHITLNSNTKTRLTNDSQQQIDTIIEHDLQKGHIPGASILIVKNGKVFLNKGYGYQDVDKKVKASPTTKYEIASNTKAFTGLAILKLAQEGRLNLNDAVSKHVPHFKMNYNGQNETITIKQLLAQTSGIPSDITSEDAVTNKNNRLNDVTRAIMGDELHHKPGEEFEYSNMNYDLLGLIIQNVTKQSYTQYITDHWLKPLQMKHTTFKQTNYKSKHDAIGYELQGSTPVVSKPEFNLWDTPSAYMMTSTEDLEHWIKFQLNPPDKYKSLVQQSHKNLSSTIGEPNANPYASGWFTNNDEHLVFHSGTLDNFSSFILLNPKQNYGIVVLANLNSEYVPKLVEHLNTQIVNHKRYSTVASILNQYKDQFNIVTVLMTTLILLAFIFSAYRAWQMRHGQILLRRSKRIAVLSWLTLCLCIAIALILYALPYLILGSNNWSFVLTWLPIEIKLALITTLIALFSTLIVILLFLHTKITKT</sequence>